<feature type="signal peptide" evidence="2">
    <location>
        <begin position="1" status="less than"/>
        <end position="1"/>
    </location>
</feature>
<feature type="chain" id="PRO_0000302745" description="Protransforming growth factor alpha">
    <location>
        <begin position="2"/>
        <end position="121"/>
    </location>
</feature>
<feature type="propeptide" id="PRO_0000007755" description="Removed in mature form" evidence="1">
    <location>
        <begin position="2"/>
        <end position="16"/>
    </location>
</feature>
<feature type="chain" id="PRO_0000007756" description="Transforming growth factor alpha">
    <location>
        <begin position="17"/>
        <end position="66"/>
    </location>
</feature>
<feature type="propeptide" id="PRO_0000007757" description="Removed in mature form" evidence="1">
    <location>
        <begin position="67"/>
        <end position="121"/>
    </location>
</feature>
<feature type="topological domain" description="Extracellular" evidence="1">
    <location>
        <begin position="2"/>
        <end position="75"/>
    </location>
</feature>
<feature type="transmembrane region" description="Helical" evidence="1">
    <location>
        <begin position="76"/>
        <end position="101"/>
    </location>
</feature>
<feature type="domain" description="EGF-like" evidence="3">
    <location>
        <begin position="20"/>
        <end position="60"/>
    </location>
</feature>
<feature type="glycosylation site" description="N-linked (GlcNAc...) asparagine" evidence="2">
    <location>
        <position position="3"/>
    </location>
</feature>
<feature type="disulfide bond" evidence="3">
    <location>
        <begin position="24"/>
        <end position="37"/>
    </location>
</feature>
<feature type="disulfide bond" evidence="3">
    <location>
        <begin position="32"/>
        <end position="48"/>
    </location>
</feature>
<feature type="disulfide bond" evidence="3">
    <location>
        <begin position="50"/>
        <end position="59"/>
    </location>
</feature>
<feature type="non-terminal residue">
    <location>
        <position position="1"/>
    </location>
</feature>
<feature type="non-terminal residue">
    <location>
        <position position="121"/>
    </location>
</feature>
<dbReference type="EMBL" id="S75913">
    <property type="protein sequence ID" value="AAB33094.1"/>
    <property type="molecule type" value="mRNA"/>
</dbReference>
<dbReference type="PIR" id="I58134">
    <property type="entry name" value="I58134"/>
</dbReference>
<dbReference type="BMRB" id="P55244"/>
<dbReference type="SMR" id="P55244"/>
<dbReference type="STRING" id="9544.ENSMMUP00000045964"/>
<dbReference type="GlyCosmos" id="P55244">
    <property type="glycosylation" value="1 site, No reported glycans"/>
</dbReference>
<dbReference type="PaxDb" id="9544-ENSMMUP00000013878"/>
<dbReference type="eggNOG" id="ENOG502RYAF">
    <property type="taxonomic scope" value="Eukaryota"/>
</dbReference>
<dbReference type="InParanoid" id="P55244"/>
<dbReference type="Proteomes" id="UP000006718">
    <property type="component" value="Unassembled WGS sequence"/>
</dbReference>
<dbReference type="GO" id="GO:0005615">
    <property type="term" value="C:extracellular space"/>
    <property type="evidence" value="ECO:0000318"/>
    <property type="project" value="GO_Central"/>
</dbReference>
<dbReference type="GO" id="GO:0005886">
    <property type="term" value="C:plasma membrane"/>
    <property type="evidence" value="ECO:0007669"/>
    <property type="project" value="UniProtKB-SubCell"/>
</dbReference>
<dbReference type="GO" id="GO:0005154">
    <property type="term" value="F:epidermal growth factor receptor binding"/>
    <property type="evidence" value="ECO:0000250"/>
    <property type="project" value="HGNC"/>
</dbReference>
<dbReference type="GO" id="GO:0008083">
    <property type="term" value="F:growth factor activity"/>
    <property type="evidence" value="ECO:0000250"/>
    <property type="project" value="HGNC-UCL"/>
</dbReference>
<dbReference type="GO" id="GO:0007166">
    <property type="term" value="P:cell surface receptor signaling pathway"/>
    <property type="evidence" value="ECO:0000250"/>
    <property type="project" value="HGNC-UCL"/>
</dbReference>
<dbReference type="GO" id="GO:0007173">
    <property type="term" value="P:epidermal growth factor receptor signaling pathway"/>
    <property type="evidence" value="ECO:0000318"/>
    <property type="project" value="GO_Central"/>
</dbReference>
<dbReference type="GO" id="GO:0051781">
    <property type="term" value="P:positive regulation of cell division"/>
    <property type="evidence" value="ECO:0007669"/>
    <property type="project" value="UniProtKB-KW"/>
</dbReference>
<dbReference type="GO" id="GO:0008284">
    <property type="term" value="P:positive regulation of cell population proliferation"/>
    <property type="evidence" value="ECO:0000318"/>
    <property type="project" value="GO_Central"/>
</dbReference>
<dbReference type="GO" id="GO:0050679">
    <property type="term" value="P:positive regulation of epithelial cell proliferation"/>
    <property type="evidence" value="ECO:0000250"/>
    <property type="project" value="HGNC-UCL"/>
</dbReference>
<dbReference type="GO" id="GO:0043410">
    <property type="term" value="P:positive regulation of MAPK cascade"/>
    <property type="evidence" value="ECO:0000250"/>
    <property type="project" value="HGNC-UCL"/>
</dbReference>
<dbReference type="GO" id="GO:0045840">
    <property type="term" value="P:positive regulation of mitotic nuclear division"/>
    <property type="evidence" value="ECO:0000318"/>
    <property type="project" value="GO_Central"/>
</dbReference>
<dbReference type="FunFam" id="2.10.25.10:FF:000182">
    <property type="entry name" value="Protransforming growth factor alpha"/>
    <property type="match status" value="1"/>
</dbReference>
<dbReference type="Gene3D" id="2.10.25.10">
    <property type="entry name" value="Laminin"/>
    <property type="match status" value="1"/>
</dbReference>
<dbReference type="InterPro" id="IPR000742">
    <property type="entry name" value="EGF-like_dom"/>
</dbReference>
<dbReference type="PANTHER" id="PTHR10740:SF1">
    <property type="entry name" value="PROTRANSFORMING GROWTH FACTOR ALPHA"/>
    <property type="match status" value="1"/>
</dbReference>
<dbReference type="PANTHER" id="PTHR10740">
    <property type="entry name" value="TRANSFORMING GROWTH FACTOR ALPHA"/>
    <property type="match status" value="1"/>
</dbReference>
<dbReference type="PRINTS" id="PR00009">
    <property type="entry name" value="EGFTGF"/>
</dbReference>
<dbReference type="SUPFAM" id="SSF57196">
    <property type="entry name" value="EGF/Laminin"/>
    <property type="match status" value="1"/>
</dbReference>
<dbReference type="PROSITE" id="PS00022">
    <property type="entry name" value="EGF_1"/>
    <property type="match status" value="1"/>
</dbReference>
<dbReference type="PROSITE" id="PS01186">
    <property type="entry name" value="EGF_2"/>
    <property type="match status" value="1"/>
</dbReference>
<dbReference type="PROSITE" id="PS50026">
    <property type="entry name" value="EGF_3"/>
    <property type="match status" value="1"/>
</dbReference>
<organism>
    <name type="scientific">Macaca mulatta</name>
    <name type="common">Rhesus macaque</name>
    <dbReference type="NCBI Taxonomy" id="9544"/>
    <lineage>
        <taxon>Eukaryota</taxon>
        <taxon>Metazoa</taxon>
        <taxon>Chordata</taxon>
        <taxon>Craniata</taxon>
        <taxon>Vertebrata</taxon>
        <taxon>Euteleostomi</taxon>
        <taxon>Mammalia</taxon>
        <taxon>Eutheria</taxon>
        <taxon>Euarchontoglires</taxon>
        <taxon>Primates</taxon>
        <taxon>Haplorrhini</taxon>
        <taxon>Catarrhini</taxon>
        <taxon>Cercopithecidae</taxon>
        <taxon>Cercopithecinae</taxon>
        <taxon>Macaca</taxon>
    </lineage>
</organism>
<keyword id="KW-1003">Cell membrane</keyword>
<keyword id="KW-1015">Disulfide bond</keyword>
<keyword id="KW-0245">EGF-like domain</keyword>
<keyword id="KW-0325">Glycoprotein</keyword>
<keyword id="KW-0339">Growth factor</keyword>
<keyword id="KW-0472">Membrane</keyword>
<keyword id="KW-0497">Mitogen</keyword>
<keyword id="KW-1185">Reference proteome</keyword>
<keyword id="KW-0964">Secreted</keyword>
<keyword id="KW-0732">Signal</keyword>
<keyword id="KW-0812">Transmembrane</keyword>
<keyword id="KW-1133">Transmembrane helix</keyword>
<sequence>LENSTSLLSDPPVAAAVVSHFNDCPDSHTQFCFHGTCRFLVQEDRPACVCHSGYVGARCEHADLLAVVAASQKKQAITALVVVSIVALAVLIITCVLIHCCQVRKHCEWCRALICRHEKPS</sequence>
<protein>
    <recommendedName>
        <fullName>Protransforming growth factor alpha</fullName>
    </recommendedName>
    <component>
        <recommendedName>
            <fullName>Transforming growth factor alpha</fullName>
            <shortName>TGF-alpha</shortName>
        </recommendedName>
        <alternativeName>
            <fullName>EGF-like TGF</fullName>
            <shortName>ETGF</shortName>
        </alternativeName>
        <alternativeName>
            <fullName>TGF type 1</fullName>
        </alternativeName>
    </component>
</protein>
<comment type="function">
    <text evidence="1">TGF alpha is a mitogenic polypeptide that is able to bind to the EGF receptor/EGFR and to act synergistically with TGF beta to promote anchorage-independent cell proliferation in soft agar.</text>
</comment>
<comment type="subunit">
    <text evidence="1">Interacts with the PDZ domains of MAGI3, SDCBP and SNTA1. The interaction with SDCBP, is required for the targeting to the cell surface. In the endoplasmic reticulum, in its immature form (i.e. with a prosegment and lacking full N-glycosylation), interacts with CNIH. In the Golgi apparatus, may form a complex with CNIH and GORASP2. Interacts (via cytoplasmic C-terminal domain) with NKD2 (By similarity).</text>
</comment>
<comment type="subcellular location">
    <molecule>Transforming growth factor alpha</molecule>
    <subcellularLocation>
        <location evidence="1">Secreted</location>
        <location evidence="1">Extracellular space</location>
    </subcellularLocation>
</comment>
<comment type="subcellular location">
    <molecule>Protransforming growth factor alpha</molecule>
    <subcellularLocation>
        <location evidence="1">Cell membrane</location>
        <topology evidence="1">Single-pass type I membrane protein</topology>
    </subcellularLocation>
</comment>
<comment type="tissue specificity">
    <text evidence="4">Hypothalamus.</text>
</comment>
<comment type="developmental stage">
    <text evidence="4">Levels in the medial basal hypothalamus and preoptic area are elevated during neonatal life (1 week-6 months), decrease during juvenile development (8-18 months) and markedly increase during the expected time of puberty (30-36 months).</text>
</comment>
<reference key="1">
    <citation type="journal article" date="1994" name="Neuroendocrinology">
        <title>Developmental expression of the genes encoding transforming growth factor alpha and its receptor in the hypothalamus of female rhesus macaques.</title>
        <authorList>
            <person name="Ma Y.J."/>
            <person name="Costa M.E."/>
            <person name="Ojeda S.R."/>
        </authorList>
    </citation>
    <scope>NUCLEOTIDE SEQUENCE [MRNA]</scope>
    <scope>DEVELOPMENTAL STAGE</scope>
    <scope>TISSUE SPECIFICITY</scope>
    <source>
        <tissue>Hypothalamus</tissue>
    </source>
</reference>
<gene>
    <name type="primary">TGFA</name>
</gene>
<proteinExistence type="evidence at transcript level"/>
<accession>P55244</accession>
<name>TGFA_MACMU</name>
<evidence type="ECO:0000250" key="1"/>
<evidence type="ECO:0000255" key="2"/>
<evidence type="ECO:0000255" key="3">
    <source>
        <dbReference type="PROSITE-ProRule" id="PRU00076"/>
    </source>
</evidence>
<evidence type="ECO:0000269" key="4">
    <source>
    </source>
</evidence>